<keyword id="KW-0227">DNA damage</keyword>
<keyword id="KW-0233">DNA recombination</keyword>
<keyword id="KW-0234">DNA repair</keyword>
<keyword id="KW-0238">DNA-binding</keyword>
<keyword id="KW-0539">Nucleus</keyword>
<keyword id="KW-1185">Reference proteome</keyword>
<organism>
    <name type="scientific">Eremothecium gossypii (strain ATCC 10895 / CBS 109.51 / FGSC 9923 / NRRL Y-1056)</name>
    <name type="common">Yeast</name>
    <name type="synonym">Ashbya gossypii</name>
    <dbReference type="NCBI Taxonomy" id="284811"/>
    <lineage>
        <taxon>Eukaryota</taxon>
        <taxon>Fungi</taxon>
        <taxon>Dikarya</taxon>
        <taxon>Ascomycota</taxon>
        <taxon>Saccharomycotina</taxon>
        <taxon>Saccharomycetes</taxon>
        <taxon>Saccharomycetales</taxon>
        <taxon>Saccharomycetaceae</taxon>
        <taxon>Eremothecium</taxon>
    </lineage>
</organism>
<gene>
    <name type="primary">RAD52</name>
    <name type="ordered locus">AER306C</name>
</gene>
<reference key="1">
    <citation type="journal article" date="2004" name="Science">
        <title>The Ashbya gossypii genome as a tool for mapping the ancient Saccharomyces cerevisiae genome.</title>
        <authorList>
            <person name="Dietrich F.S."/>
            <person name="Voegeli S."/>
            <person name="Brachat S."/>
            <person name="Lerch A."/>
            <person name="Gates K."/>
            <person name="Steiner S."/>
            <person name="Mohr C."/>
            <person name="Poehlmann R."/>
            <person name="Luedi P."/>
            <person name="Choi S."/>
            <person name="Wing R.A."/>
            <person name="Flavier A."/>
            <person name="Gaffney T.D."/>
            <person name="Philippsen P."/>
        </authorList>
    </citation>
    <scope>NUCLEOTIDE SEQUENCE [LARGE SCALE GENOMIC DNA]</scope>
    <source>
        <strain>ATCC 10895 / CBS 109.51 / FGSC 9923 / NRRL Y-1056</strain>
    </source>
</reference>
<reference key="2">
    <citation type="journal article" date="2013" name="G3 (Bethesda)">
        <title>Genomes of Ashbya fungi isolated from insects reveal four mating-type loci, numerous translocations, lack of transposons, and distinct gene duplications.</title>
        <authorList>
            <person name="Dietrich F.S."/>
            <person name="Voegeli S."/>
            <person name="Kuo S."/>
            <person name="Philippsen P."/>
        </authorList>
    </citation>
    <scope>GENOME REANNOTATION</scope>
    <source>
        <strain>ATCC 10895 / CBS 109.51 / FGSC 9923 / NRRL Y-1056</strain>
    </source>
</reference>
<name>RAD52_EREGS</name>
<proteinExistence type="inferred from homology"/>
<evidence type="ECO:0000250" key="1"/>
<evidence type="ECO:0000256" key="2">
    <source>
        <dbReference type="SAM" id="MobiDB-lite"/>
    </source>
</evidence>
<evidence type="ECO:0000305" key="3"/>
<dbReference type="EMBL" id="AE016818">
    <property type="protein sequence ID" value="AAS52986.1"/>
    <property type="molecule type" value="Genomic_DNA"/>
</dbReference>
<dbReference type="RefSeq" id="NP_985162.1">
    <property type="nucleotide sequence ID" value="NM_210516.1"/>
</dbReference>
<dbReference type="SMR" id="Q756F4"/>
<dbReference type="FunCoup" id="Q756F4">
    <property type="interactions" value="322"/>
</dbReference>
<dbReference type="STRING" id="284811.Q756F4"/>
<dbReference type="EnsemblFungi" id="AAS52986">
    <property type="protein sequence ID" value="AAS52986"/>
    <property type="gene ID" value="AGOS_AER306C"/>
</dbReference>
<dbReference type="GeneID" id="4621375"/>
<dbReference type="KEGG" id="ago:AGOS_AER306C"/>
<dbReference type="eggNOG" id="KOG4141">
    <property type="taxonomic scope" value="Eukaryota"/>
</dbReference>
<dbReference type="HOGENOM" id="CLU_011431_3_2_1"/>
<dbReference type="InParanoid" id="Q756F4"/>
<dbReference type="OMA" id="MFSDDFQ"/>
<dbReference type="OrthoDB" id="206565at2759"/>
<dbReference type="Proteomes" id="UP000000591">
    <property type="component" value="Chromosome V"/>
</dbReference>
<dbReference type="GO" id="GO:0005739">
    <property type="term" value="C:mitochondrion"/>
    <property type="evidence" value="ECO:0007669"/>
    <property type="project" value="GOC"/>
</dbReference>
<dbReference type="GO" id="GO:0000228">
    <property type="term" value="C:nuclear chromosome"/>
    <property type="evidence" value="ECO:0007669"/>
    <property type="project" value="EnsemblFungi"/>
</dbReference>
<dbReference type="GO" id="GO:0005634">
    <property type="term" value="C:nucleus"/>
    <property type="evidence" value="ECO:0000318"/>
    <property type="project" value="GO_Central"/>
</dbReference>
<dbReference type="GO" id="GO:0000150">
    <property type="term" value="F:DNA strand exchange activity"/>
    <property type="evidence" value="ECO:0007669"/>
    <property type="project" value="EnsemblFungi"/>
</dbReference>
<dbReference type="GO" id="GO:1990814">
    <property type="term" value="F:DNA/DNA annealing activity"/>
    <property type="evidence" value="ECO:0007669"/>
    <property type="project" value="EnsemblFungi"/>
</dbReference>
<dbReference type="GO" id="GO:0006277">
    <property type="term" value="P:DNA amplification"/>
    <property type="evidence" value="ECO:0007669"/>
    <property type="project" value="EnsemblFungi"/>
</dbReference>
<dbReference type="GO" id="GO:0000730">
    <property type="term" value="P:DNA recombinase assembly"/>
    <property type="evidence" value="ECO:0007669"/>
    <property type="project" value="EnsemblFungi"/>
</dbReference>
<dbReference type="GO" id="GO:0000727">
    <property type="term" value="P:double-strand break repair via break-induced replication"/>
    <property type="evidence" value="ECO:0007669"/>
    <property type="project" value="EnsemblFungi"/>
</dbReference>
<dbReference type="GO" id="GO:0000724">
    <property type="term" value="P:double-strand break repair via homologous recombination"/>
    <property type="evidence" value="ECO:0000318"/>
    <property type="project" value="GO_Central"/>
</dbReference>
<dbReference type="GO" id="GO:0045002">
    <property type="term" value="P:double-strand break repair via single-strand annealing"/>
    <property type="evidence" value="ECO:0000318"/>
    <property type="project" value="GO_Central"/>
</dbReference>
<dbReference type="GO" id="GO:0000709">
    <property type="term" value="P:meiotic joint molecule formation"/>
    <property type="evidence" value="ECO:0007669"/>
    <property type="project" value="EnsemblFungi"/>
</dbReference>
<dbReference type="GO" id="GO:0043504">
    <property type="term" value="P:mitochondrial DNA repair"/>
    <property type="evidence" value="ECO:0007669"/>
    <property type="project" value="EnsemblFungi"/>
</dbReference>
<dbReference type="GO" id="GO:0006312">
    <property type="term" value="P:mitotic recombination"/>
    <property type="evidence" value="ECO:0000318"/>
    <property type="project" value="GO_Central"/>
</dbReference>
<dbReference type="GO" id="GO:0006301">
    <property type="term" value="P:postreplication repair"/>
    <property type="evidence" value="ECO:0007669"/>
    <property type="project" value="EnsemblFungi"/>
</dbReference>
<dbReference type="GO" id="GO:0000722">
    <property type="term" value="P:telomere maintenance via recombination"/>
    <property type="evidence" value="ECO:0007669"/>
    <property type="project" value="EnsemblFungi"/>
</dbReference>
<dbReference type="FunFam" id="3.30.390.80:FF:000001">
    <property type="entry name" value="DNA repair protein RAD52 homolog"/>
    <property type="match status" value="1"/>
</dbReference>
<dbReference type="Gene3D" id="3.30.390.80">
    <property type="entry name" value="DNA repair protein Rad52/59/22"/>
    <property type="match status" value="1"/>
</dbReference>
<dbReference type="InterPro" id="IPR004585">
    <property type="entry name" value="DNA_recomb/repair_Rad52"/>
</dbReference>
<dbReference type="InterPro" id="IPR041247">
    <property type="entry name" value="Rad52_fam"/>
</dbReference>
<dbReference type="InterPro" id="IPR007232">
    <property type="entry name" value="Rad52_Rad59_Rad22"/>
</dbReference>
<dbReference type="InterPro" id="IPR042525">
    <property type="entry name" value="Rad52_Rad59_Rad22_sf"/>
</dbReference>
<dbReference type="NCBIfam" id="TIGR00607">
    <property type="entry name" value="rad52"/>
    <property type="match status" value="1"/>
</dbReference>
<dbReference type="PANTHER" id="PTHR12132">
    <property type="entry name" value="DNA REPAIR AND RECOMBINATION PROTEIN RAD52, RAD59"/>
    <property type="match status" value="1"/>
</dbReference>
<dbReference type="PANTHER" id="PTHR12132:SF1">
    <property type="entry name" value="DNA REPAIR PROTEIN RAD52 HOMOLOG"/>
    <property type="match status" value="1"/>
</dbReference>
<dbReference type="Pfam" id="PF04098">
    <property type="entry name" value="Rad52_Rad22"/>
    <property type="match status" value="1"/>
</dbReference>
<dbReference type="SUPFAM" id="SSF54768">
    <property type="entry name" value="dsRNA-binding domain-like"/>
    <property type="match status" value="1"/>
</dbReference>
<accession>Q756F4</accession>
<comment type="function">
    <text evidence="1">Involved in DNA double-strand break (DSB) repair and recombination. Promotes the annealing of complementary single-stranded DNA and by stimulation of the RAD51 recombinase (By similarity).</text>
</comment>
<comment type="subunit">
    <text evidence="1">Part of a complex that includes RAD51, RAD52 and RAD59.</text>
</comment>
<comment type="subcellular location">
    <subcellularLocation>
        <location evidence="1">Nucleus</location>
    </subcellularLocation>
</comment>
<comment type="similarity">
    <text evidence="3">Belongs to the RAD52 family.</text>
</comment>
<feature type="chain" id="PRO_0000173884" description="DNA repair and recombination protein RAD52">
    <location>
        <begin position="1"/>
        <end position="435"/>
    </location>
</feature>
<feature type="DNA-binding region" evidence="1">
    <location>
        <begin position="128"/>
        <end position="132"/>
    </location>
</feature>
<feature type="region of interest" description="Disordered" evidence="2">
    <location>
        <begin position="161"/>
        <end position="281"/>
    </location>
</feature>
<feature type="region of interest" description="Disordered" evidence="2">
    <location>
        <begin position="349"/>
        <end position="435"/>
    </location>
</feature>
<feature type="compositionally biased region" description="Low complexity" evidence="2">
    <location>
        <begin position="206"/>
        <end position="217"/>
    </location>
</feature>
<feature type="compositionally biased region" description="Pro residues" evidence="2">
    <location>
        <begin position="265"/>
        <end position="281"/>
    </location>
</feature>
<feature type="compositionally biased region" description="Low complexity" evidence="2">
    <location>
        <begin position="361"/>
        <end position="375"/>
    </location>
</feature>
<feature type="compositionally biased region" description="Polar residues" evidence="2">
    <location>
        <begin position="377"/>
        <end position="390"/>
    </location>
</feature>
<protein>
    <recommendedName>
        <fullName>DNA repair and recombination protein RAD52</fullName>
    </recommendedName>
</protein>
<sequence>MADDKKGQMGNVDDIQAKLDKRLGPEYISKRVGHGTTRVAYIEGWKAINLANQIFGFNGWSSEVKSVTVDFMDERQGRFTIGCTAVVRVTLSDGTFREDIGYGTVENDRRKSGAFERAKKSAVTDALKRSLRGFGNALGNCLYDKDFLSKIDKVKFEPPDFDEGNLFRATDENNELSRANTVTDHSEGPAPKKRNAPLPPAPRPGAMRPEAAHAAPAPSEPPLERPRSSENDQEDLLDDSFMFSDELQDDDLINIGSAKKAPSGVPRPAPPPPPRAWPPQDAPVAFVTAKAAPDLQAHGPVPPTHLFDPKFQAQSIRHTVDQTTSAHVKLSVLREKGIDQARDDIYSKFAPKGKILPPPDTATDPDPTLAARPALSAPQNLPTNTSSIQRPTMIELPKLHFPQPTAVPLPNVPASRREVGRPKQSPPSLRKPPPQ</sequence>